<sequence>MSRNSYIQQNSDIQAAGGLVPMVIEQSARGERAYDIYSRLLKERVIFMVGPVEDYMANLIAAQLLFLEAENPDKDIHLYINSPGGSVTAGMSIYDTMQFIKPDVSTICIGQACSMGAFLLAGGAEGKRHCLPNSRMMIHQPLGGFQGQASDIDIHAKEILHIRHRLNSLLAHHTGQSLETIERDTERDNFMSAERAAEYGLIDSVINKRQMPA</sequence>
<comment type="function">
    <text evidence="1">Cleaves peptides in various proteins in a process that requires ATP hydrolysis. Has a chymotrypsin-like activity. Plays a major role in the degradation of misfolded proteins.</text>
</comment>
<comment type="catalytic activity">
    <reaction evidence="1">
        <text>Hydrolysis of proteins to small peptides in the presence of ATP and magnesium. alpha-casein is the usual test substrate. In the absence of ATP, only oligopeptides shorter than five residues are hydrolyzed (such as succinyl-Leu-Tyr-|-NHMec, and Leu-Tyr-Leu-|-Tyr-Trp, in which cleavage of the -Tyr-|-Leu- and -Tyr-|-Trp bonds also occurs).</text>
        <dbReference type="EC" id="3.4.21.92"/>
    </reaction>
</comment>
<comment type="subunit">
    <text evidence="1">Fourteen ClpP subunits assemble into 2 heptameric rings which stack back to back to give a disk-like structure with a central cavity, resembling the structure of eukaryotic proteasomes.</text>
</comment>
<comment type="subcellular location">
    <subcellularLocation>
        <location evidence="1">Cytoplasm</location>
    </subcellularLocation>
</comment>
<comment type="similarity">
    <text evidence="1">Belongs to the peptidase S14 family.</text>
</comment>
<reference key="1">
    <citation type="journal article" date="2005" name="J. Bacteriol.">
        <title>Whole-genome sequence analysis of Pseudomonas syringae pv. phaseolicola 1448A reveals divergence among pathovars in genes involved in virulence and transposition.</title>
        <authorList>
            <person name="Joardar V."/>
            <person name="Lindeberg M."/>
            <person name="Jackson R.W."/>
            <person name="Selengut J."/>
            <person name="Dodson R."/>
            <person name="Brinkac L.M."/>
            <person name="Daugherty S.C."/>
            <person name="DeBoy R.T."/>
            <person name="Durkin A.S."/>
            <person name="Gwinn Giglio M."/>
            <person name="Madupu R."/>
            <person name="Nelson W.C."/>
            <person name="Rosovitz M.J."/>
            <person name="Sullivan S.A."/>
            <person name="Crabtree J."/>
            <person name="Creasy T."/>
            <person name="Davidsen T.M."/>
            <person name="Haft D.H."/>
            <person name="Zafar N."/>
            <person name="Zhou L."/>
            <person name="Halpin R."/>
            <person name="Holley T."/>
            <person name="Khouri H.M."/>
            <person name="Feldblyum T.V."/>
            <person name="White O."/>
            <person name="Fraser C.M."/>
            <person name="Chatterjee A.K."/>
            <person name="Cartinhour S."/>
            <person name="Schneider D."/>
            <person name="Mansfield J.W."/>
            <person name="Collmer A."/>
            <person name="Buell R."/>
        </authorList>
    </citation>
    <scope>NUCLEOTIDE SEQUENCE [LARGE SCALE GENOMIC DNA]</scope>
    <source>
        <strain>1448A / Race 6</strain>
    </source>
</reference>
<dbReference type="EC" id="3.4.21.92" evidence="1"/>
<dbReference type="EMBL" id="CP000058">
    <property type="protein sequence ID" value="AAZ33449.1"/>
    <property type="molecule type" value="Genomic_DNA"/>
</dbReference>
<dbReference type="RefSeq" id="WP_002552734.1">
    <property type="nucleotide sequence ID" value="NC_005773.3"/>
</dbReference>
<dbReference type="SMR" id="Q48KZ0"/>
<dbReference type="MEROPS" id="S14.001"/>
<dbReference type="GeneID" id="96218173"/>
<dbReference type="KEGG" id="psp:PSPPH_1698"/>
<dbReference type="eggNOG" id="COG0740">
    <property type="taxonomic scope" value="Bacteria"/>
</dbReference>
<dbReference type="HOGENOM" id="CLU_058707_3_2_6"/>
<dbReference type="Proteomes" id="UP000000551">
    <property type="component" value="Chromosome"/>
</dbReference>
<dbReference type="GO" id="GO:0005737">
    <property type="term" value="C:cytoplasm"/>
    <property type="evidence" value="ECO:0007669"/>
    <property type="project" value="UniProtKB-SubCell"/>
</dbReference>
<dbReference type="GO" id="GO:0009368">
    <property type="term" value="C:endopeptidase Clp complex"/>
    <property type="evidence" value="ECO:0007669"/>
    <property type="project" value="TreeGrafter"/>
</dbReference>
<dbReference type="GO" id="GO:0004176">
    <property type="term" value="F:ATP-dependent peptidase activity"/>
    <property type="evidence" value="ECO:0007669"/>
    <property type="project" value="InterPro"/>
</dbReference>
<dbReference type="GO" id="GO:0051117">
    <property type="term" value="F:ATPase binding"/>
    <property type="evidence" value="ECO:0007669"/>
    <property type="project" value="TreeGrafter"/>
</dbReference>
<dbReference type="GO" id="GO:0004252">
    <property type="term" value="F:serine-type endopeptidase activity"/>
    <property type="evidence" value="ECO:0007669"/>
    <property type="project" value="UniProtKB-UniRule"/>
</dbReference>
<dbReference type="GO" id="GO:0006515">
    <property type="term" value="P:protein quality control for misfolded or incompletely synthesized proteins"/>
    <property type="evidence" value="ECO:0007669"/>
    <property type="project" value="TreeGrafter"/>
</dbReference>
<dbReference type="CDD" id="cd07017">
    <property type="entry name" value="S14_ClpP_2"/>
    <property type="match status" value="1"/>
</dbReference>
<dbReference type="FunFam" id="3.90.226.10:FF:000001">
    <property type="entry name" value="ATP-dependent Clp protease proteolytic subunit"/>
    <property type="match status" value="1"/>
</dbReference>
<dbReference type="Gene3D" id="3.90.226.10">
    <property type="entry name" value="2-enoyl-CoA Hydratase, Chain A, domain 1"/>
    <property type="match status" value="1"/>
</dbReference>
<dbReference type="HAMAP" id="MF_00444">
    <property type="entry name" value="ClpP"/>
    <property type="match status" value="1"/>
</dbReference>
<dbReference type="InterPro" id="IPR001907">
    <property type="entry name" value="ClpP"/>
</dbReference>
<dbReference type="InterPro" id="IPR029045">
    <property type="entry name" value="ClpP/crotonase-like_dom_sf"/>
</dbReference>
<dbReference type="InterPro" id="IPR023562">
    <property type="entry name" value="ClpP/TepA"/>
</dbReference>
<dbReference type="InterPro" id="IPR033135">
    <property type="entry name" value="ClpP_His_AS"/>
</dbReference>
<dbReference type="InterPro" id="IPR018215">
    <property type="entry name" value="ClpP_Ser_AS"/>
</dbReference>
<dbReference type="NCBIfam" id="TIGR00493">
    <property type="entry name" value="clpP"/>
    <property type="match status" value="1"/>
</dbReference>
<dbReference type="NCBIfam" id="NF001368">
    <property type="entry name" value="PRK00277.1"/>
    <property type="match status" value="1"/>
</dbReference>
<dbReference type="NCBIfam" id="NF009205">
    <property type="entry name" value="PRK12553.1"/>
    <property type="match status" value="1"/>
</dbReference>
<dbReference type="PANTHER" id="PTHR10381">
    <property type="entry name" value="ATP-DEPENDENT CLP PROTEASE PROTEOLYTIC SUBUNIT"/>
    <property type="match status" value="1"/>
</dbReference>
<dbReference type="PANTHER" id="PTHR10381:SF70">
    <property type="entry name" value="ATP-DEPENDENT CLP PROTEASE PROTEOLYTIC SUBUNIT"/>
    <property type="match status" value="1"/>
</dbReference>
<dbReference type="Pfam" id="PF00574">
    <property type="entry name" value="CLP_protease"/>
    <property type="match status" value="1"/>
</dbReference>
<dbReference type="PRINTS" id="PR00127">
    <property type="entry name" value="CLPPROTEASEP"/>
</dbReference>
<dbReference type="SUPFAM" id="SSF52096">
    <property type="entry name" value="ClpP/crotonase"/>
    <property type="match status" value="1"/>
</dbReference>
<dbReference type="PROSITE" id="PS00382">
    <property type="entry name" value="CLP_PROTEASE_HIS"/>
    <property type="match status" value="1"/>
</dbReference>
<dbReference type="PROSITE" id="PS00381">
    <property type="entry name" value="CLP_PROTEASE_SER"/>
    <property type="match status" value="1"/>
</dbReference>
<accession>Q48KZ0</accession>
<gene>
    <name evidence="1" type="primary">clpP</name>
    <name type="ordered locus">PSPPH_1698</name>
</gene>
<keyword id="KW-0963">Cytoplasm</keyword>
<keyword id="KW-0378">Hydrolase</keyword>
<keyword id="KW-0645">Protease</keyword>
<keyword id="KW-0720">Serine protease</keyword>
<name>CLPP_PSE14</name>
<proteinExistence type="inferred from homology"/>
<protein>
    <recommendedName>
        <fullName evidence="1">ATP-dependent Clp protease proteolytic subunit</fullName>
        <ecNumber evidence="1">3.4.21.92</ecNumber>
    </recommendedName>
    <alternativeName>
        <fullName evidence="1">Endopeptidase Clp</fullName>
    </alternativeName>
</protein>
<organism>
    <name type="scientific">Pseudomonas savastanoi pv. phaseolicola (strain 1448A / Race 6)</name>
    <name type="common">Pseudomonas syringae pv. phaseolicola (strain 1448A / Race 6)</name>
    <dbReference type="NCBI Taxonomy" id="264730"/>
    <lineage>
        <taxon>Bacteria</taxon>
        <taxon>Pseudomonadati</taxon>
        <taxon>Pseudomonadota</taxon>
        <taxon>Gammaproteobacteria</taxon>
        <taxon>Pseudomonadales</taxon>
        <taxon>Pseudomonadaceae</taxon>
        <taxon>Pseudomonas</taxon>
    </lineage>
</organism>
<feature type="chain" id="PRO_0000226461" description="ATP-dependent Clp protease proteolytic subunit">
    <location>
        <begin position="1"/>
        <end position="213"/>
    </location>
</feature>
<feature type="active site" description="Nucleophile" evidence="1">
    <location>
        <position position="114"/>
    </location>
</feature>
<feature type="active site" evidence="1">
    <location>
        <position position="139"/>
    </location>
</feature>
<evidence type="ECO:0000255" key="1">
    <source>
        <dbReference type="HAMAP-Rule" id="MF_00444"/>
    </source>
</evidence>